<name>SYFA_ACIET</name>
<dbReference type="EC" id="6.1.1.20" evidence="1"/>
<dbReference type="EMBL" id="CP001392">
    <property type="protein sequence ID" value="ACM32914.1"/>
    <property type="molecule type" value="Genomic_DNA"/>
</dbReference>
<dbReference type="RefSeq" id="WP_011805602.1">
    <property type="nucleotide sequence ID" value="NC_011992.1"/>
</dbReference>
<dbReference type="SMR" id="B9MHY2"/>
<dbReference type="GeneID" id="84681841"/>
<dbReference type="KEGG" id="dia:Dtpsy_1452"/>
<dbReference type="eggNOG" id="COG0016">
    <property type="taxonomic scope" value="Bacteria"/>
</dbReference>
<dbReference type="HOGENOM" id="CLU_025086_0_1_4"/>
<dbReference type="Proteomes" id="UP000000450">
    <property type="component" value="Chromosome"/>
</dbReference>
<dbReference type="GO" id="GO:0005737">
    <property type="term" value="C:cytoplasm"/>
    <property type="evidence" value="ECO:0007669"/>
    <property type="project" value="UniProtKB-SubCell"/>
</dbReference>
<dbReference type="GO" id="GO:0005524">
    <property type="term" value="F:ATP binding"/>
    <property type="evidence" value="ECO:0007669"/>
    <property type="project" value="UniProtKB-UniRule"/>
</dbReference>
<dbReference type="GO" id="GO:0000287">
    <property type="term" value="F:magnesium ion binding"/>
    <property type="evidence" value="ECO:0007669"/>
    <property type="project" value="UniProtKB-UniRule"/>
</dbReference>
<dbReference type="GO" id="GO:0004826">
    <property type="term" value="F:phenylalanine-tRNA ligase activity"/>
    <property type="evidence" value="ECO:0007669"/>
    <property type="project" value="UniProtKB-UniRule"/>
</dbReference>
<dbReference type="GO" id="GO:0000049">
    <property type="term" value="F:tRNA binding"/>
    <property type="evidence" value="ECO:0007669"/>
    <property type="project" value="InterPro"/>
</dbReference>
<dbReference type="GO" id="GO:0006432">
    <property type="term" value="P:phenylalanyl-tRNA aminoacylation"/>
    <property type="evidence" value="ECO:0007669"/>
    <property type="project" value="UniProtKB-UniRule"/>
</dbReference>
<dbReference type="CDD" id="cd00496">
    <property type="entry name" value="PheRS_alpha_core"/>
    <property type="match status" value="1"/>
</dbReference>
<dbReference type="Gene3D" id="3.30.930.10">
    <property type="entry name" value="Bira Bifunctional Protein, Domain 2"/>
    <property type="match status" value="1"/>
</dbReference>
<dbReference type="HAMAP" id="MF_00281">
    <property type="entry name" value="Phe_tRNA_synth_alpha1"/>
    <property type="match status" value="1"/>
</dbReference>
<dbReference type="InterPro" id="IPR006195">
    <property type="entry name" value="aa-tRNA-synth_II"/>
</dbReference>
<dbReference type="InterPro" id="IPR045864">
    <property type="entry name" value="aa-tRNA-synth_II/BPL/LPL"/>
</dbReference>
<dbReference type="InterPro" id="IPR004529">
    <property type="entry name" value="Phe-tRNA-synth_IIc_asu"/>
</dbReference>
<dbReference type="InterPro" id="IPR004188">
    <property type="entry name" value="Phe-tRNA_ligase_II_N"/>
</dbReference>
<dbReference type="InterPro" id="IPR022911">
    <property type="entry name" value="Phe_tRNA_ligase_alpha1_bac"/>
</dbReference>
<dbReference type="InterPro" id="IPR002319">
    <property type="entry name" value="Phenylalanyl-tRNA_Synthase"/>
</dbReference>
<dbReference type="InterPro" id="IPR010978">
    <property type="entry name" value="tRNA-bd_arm"/>
</dbReference>
<dbReference type="NCBIfam" id="TIGR00468">
    <property type="entry name" value="pheS"/>
    <property type="match status" value="1"/>
</dbReference>
<dbReference type="PANTHER" id="PTHR11538:SF41">
    <property type="entry name" value="PHENYLALANINE--TRNA LIGASE, MITOCHONDRIAL"/>
    <property type="match status" value="1"/>
</dbReference>
<dbReference type="PANTHER" id="PTHR11538">
    <property type="entry name" value="PHENYLALANYL-TRNA SYNTHETASE"/>
    <property type="match status" value="1"/>
</dbReference>
<dbReference type="Pfam" id="PF02912">
    <property type="entry name" value="Phe_tRNA-synt_N"/>
    <property type="match status" value="1"/>
</dbReference>
<dbReference type="Pfam" id="PF01409">
    <property type="entry name" value="tRNA-synt_2d"/>
    <property type="match status" value="1"/>
</dbReference>
<dbReference type="SUPFAM" id="SSF55681">
    <property type="entry name" value="Class II aaRS and biotin synthetases"/>
    <property type="match status" value="1"/>
</dbReference>
<dbReference type="SUPFAM" id="SSF46589">
    <property type="entry name" value="tRNA-binding arm"/>
    <property type="match status" value="1"/>
</dbReference>
<dbReference type="PROSITE" id="PS50862">
    <property type="entry name" value="AA_TRNA_LIGASE_II"/>
    <property type="match status" value="1"/>
</dbReference>
<feature type="chain" id="PRO_1000199307" description="Phenylalanine--tRNA ligase alpha subunit">
    <location>
        <begin position="1"/>
        <end position="350"/>
    </location>
</feature>
<feature type="binding site" evidence="1">
    <location>
        <position position="271"/>
    </location>
    <ligand>
        <name>Mg(2+)</name>
        <dbReference type="ChEBI" id="CHEBI:18420"/>
        <note>shared with beta subunit</note>
    </ligand>
</feature>
<organism>
    <name type="scientific">Acidovorax ebreus (strain TPSY)</name>
    <name type="common">Diaphorobacter sp. (strain TPSY)</name>
    <dbReference type="NCBI Taxonomy" id="535289"/>
    <lineage>
        <taxon>Bacteria</taxon>
        <taxon>Pseudomonadati</taxon>
        <taxon>Pseudomonadota</taxon>
        <taxon>Betaproteobacteria</taxon>
        <taxon>Burkholderiales</taxon>
        <taxon>Comamonadaceae</taxon>
        <taxon>Diaphorobacter</taxon>
    </lineage>
</organism>
<proteinExistence type="inferred from homology"/>
<keyword id="KW-0030">Aminoacyl-tRNA synthetase</keyword>
<keyword id="KW-0067">ATP-binding</keyword>
<keyword id="KW-0963">Cytoplasm</keyword>
<keyword id="KW-0436">Ligase</keyword>
<keyword id="KW-0460">Magnesium</keyword>
<keyword id="KW-0479">Metal-binding</keyword>
<keyword id="KW-0547">Nucleotide-binding</keyword>
<keyword id="KW-0648">Protein biosynthesis</keyword>
<keyword id="KW-1185">Reference proteome</keyword>
<sequence length="350" mass="39020">MNELDSLVTSARESFARSATPAELENAKAQFLGKSGRLTELMKGMAQLSPEEKKTRGAAINVAKQAVEAALAARRQELADAELQAQLKAEALDVTLPGRQRGRGGLHPVSLTLERIERIFGSMGFEVADGPEIETDWFNFTALNTPEDHPARSMHDTFYVEGGTPEAPNLLRTHTSPMQVRYAVQHVKKHRGLIDAGQAMPEIRVIAPGRTYRVDSDATHSPMFHQCEGLWIGENVSFKDLKVVFTDFCKTFFESDDLVLRFRPSFFPFTEPSAEIDIQFQSGPLAGKWLEVAGSGQVHPNVVRNMGLDPERFIGFAFGMGPDRLTMLRYGVNDLRLFFDGDIRFLSQFQ</sequence>
<protein>
    <recommendedName>
        <fullName evidence="1">Phenylalanine--tRNA ligase alpha subunit</fullName>
        <ecNumber evidence="1">6.1.1.20</ecNumber>
    </recommendedName>
    <alternativeName>
        <fullName evidence="1">Phenylalanyl-tRNA synthetase alpha subunit</fullName>
        <shortName evidence="1">PheRS</shortName>
    </alternativeName>
</protein>
<comment type="catalytic activity">
    <reaction evidence="1">
        <text>tRNA(Phe) + L-phenylalanine + ATP = L-phenylalanyl-tRNA(Phe) + AMP + diphosphate + H(+)</text>
        <dbReference type="Rhea" id="RHEA:19413"/>
        <dbReference type="Rhea" id="RHEA-COMP:9668"/>
        <dbReference type="Rhea" id="RHEA-COMP:9699"/>
        <dbReference type="ChEBI" id="CHEBI:15378"/>
        <dbReference type="ChEBI" id="CHEBI:30616"/>
        <dbReference type="ChEBI" id="CHEBI:33019"/>
        <dbReference type="ChEBI" id="CHEBI:58095"/>
        <dbReference type="ChEBI" id="CHEBI:78442"/>
        <dbReference type="ChEBI" id="CHEBI:78531"/>
        <dbReference type="ChEBI" id="CHEBI:456215"/>
        <dbReference type="EC" id="6.1.1.20"/>
    </reaction>
</comment>
<comment type="cofactor">
    <cofactor evidence="1">
        <name>Mg(2+)</name>
        <dbReference type="ChEBI" id="CHEBI:18420"/>
    </cofactor>
    <text evidence="1">Binds 2 magnesium ions per tetramer.</text>
</comment>
<comment type="subunit">
    <text evidence="1">Tetramer of two alpha and two beta subunits.</text>
</comment>
<comment type="subcellular location">
    <subcellularLocation>
        <location evidence="1">Cytoplasm</location>
    </subcellularLocation>
</comment>
<comment type="similarity">
    <text evidence="1">Belongs to the class-II aminoacyl-tRNA synthetase family. Phe-tRNA synthetase alpha subunit type 1 subfamily.</text>
</comment>
<accession>B9MHY2</accession>
<evidence type="ECO:0000255" key="1">
    <source>
        <dbReference type="HAMAP-Rule" id="MF_00281"/>
    </source>
</evidence>
<gene>
    <name evidence="1" type="primary">pheS</name>
    <name type="ordered locus">Dtpsy_1452</name>
</gene>
<reference key="1">
    <citation type="submission" date="2009-01" db="EMBL/GenBank/DDBJ databases">
        <title>Complete sequence of Diaphorobacter sp. TPSY.</title>
        <authorList>
            <consortium name="US DOE Joint Genome Institute"/>
            <person name="Lucas S."/>
            <person name="Copeland A."/>
            <person name="Lapidus A."/>
            <person name="Glavina del Rio T."/>
            <person name="Tice H."/>
            <person name="Bruce D."/>
            <person name="Goodwin L."/>
            <person name="Pitluck S."/>
            <person name="Chertkov O."/>
            <person name="Brettin T."/>
            <person name="Detter J.C."/>
            <person name="Han C."/>
            <person name="Larimer F."/>
            <person name="Land M."/>
            <person name="Hauser L."/>
            <person name="Kyrpides N."/>
            <person name="Mikhailova N."/>
            <person name="Coates J.D."/>
        </authorList>
    </citation>
    <scope>NUCLEOTIDE SEQUENCE [LARGE SCALE GENOMIC DNA]</scope>
    <source>
        <strain>TPSY</strain>
    </source>
</reference>